<organism>
    <name type="scientific">Cricetulus griseus</name>
    <name type="common">Chinese hamster</name>
    <name type="synonym">Cricetulus barabensis griseus</name>
    <dbReference type="NCBI Taxonomy" id="10029"/>
    <lineage>
        <taxon>Eukaryota</taxon>
        <taxon>Metazoa</taxon>
        <taxon>Chordata</taxon>
        <taxon>Craniata</taxon>
        <taxon>Vertebrata</taxon>
        <taxon>Euteleostomi</taxon>
        <taxon>Mammalia</taxon>
        <taxon>Eutheria</taxon>
        <taxon>Euarchontoglires</taxon>
        <taxon>Glires</taxon>
        <taxon>Rodentia</taxon>
        <taxon>Myomorpha</taxon>
        <taxon>Muroidea</taxon>
        <taxon>Cricetidae</taxon>
        <taxon>Cricetinae</taxon>
        <taxon>Cricetulus</taxon>
    </lineage>
</organism>
<keyword id="KW-0021">Allosteric enzyme</keyword>
<keyword id="KW-0067">ATP-binding</keyword>
<keyword id="KW-0963">Cytoplasm</keyword>
<keyword id="KW-0378">Hydrolase</keyword>
<keyword id="KW-0418">Kinase</keyword>
<keyword id="KW-0460">Magnesium</keyword>
<keyword id="KW-0479">Metal-binding</keyword>
<keyword id="KW-0511">Multifunctional enzyme</keyword>
<keyword id="KW-0547">Nucleotide-binding</keyword>
<keyword id="KW-0597">Phosphoprotein</keyword>
<keyword id="KW-0808">Transferase</keyword>
<keyword id="KW-0862">Zinc</keyword>
<reference key="1">
    <citation type="journal article" date="2003" name="J. Biol. Chem.">
        <title>Lec3 Chinese hamster ovary mutants lack UDP-N-acetylglucosamine 2-epimerase activity because of mutations in the epimerase domain of the Gne gene.</title>
        <authorList>
            <person name="Hong Y."/>
            <person name="Stanley P."/>
        </authorList>
    </citation>
    <scope>NUCLEOTIDE SEQUENCE [MRNA]</scope>
    <scope>VARIANT GLU-135</scope>
    <scope>CHARACTERIZATION OF VARIANT GLU-135</scope>
    <scope>FUNCTION</scope>
    <scope>CATALYTIC ACTIVITY</scope>
</reference>
<feature type="chain" id="PRO_0000095715" description="Bifunctional UDP-N-acetylglucosamine 2-epimerase/N-acetylmannosamine kinase">
    <location>
        <begin position="1"/>
        <end position="722"/>
    </location>
</feature>
<feature type="region of interest" description="UDP-N-acetylglucosamine 2-epimerase" evidence="1">
    <location>
        <begin position="1"/>
        <end status="unknown"/>
    </location>
</feature>
<feature type="region of interest" description="N-acetylmannosamine kinase" evidence="1">
    <location>
        <begin position="406"/>
        <end position="722"/>
    </location>
</feature>
<feature type="active site" evidence="3">
    <location>
        <position position="517"/>
    </location>
</feature>
<feature type="binding site" evidence="3">
    <location>
        <position position="19"/>
    </location>
    <ligand>
        <name>UDP</name>
        <dbReference type="ChEBI" id="CHEBI:58223"/>
    </ligand>
</feature>
<feature type="binding site" evidence="3">
    <location>
        <position position="23"/>
    </location>
    <ligand>
        <name>UDP</name>
        <dbReference type="ChEBI" id="CHEBI:58223"/>
    </ligand>
</feature>
<feature type="binding site" evidence="3">
    <location>
        <position position="113"/>
    </location>
    <ligand>
        <name>UDP</name>
        <dbReference type="ChEBI" id="CHEBI:58223"/>
    </ligand>
</feature>
<feature type="binding site" evidence="3">
    <location>
        <position position="220"/>
    </location>
    <ligand>
        <name>UDP</name>
        <dbReference type="ChEBI" id="CHEBI:58223"/>
    </ligand>
</feature>
<feature type="binding site" evidence="3">
    <location>
        <position position="253"/>
    </location>
    <ligand>
        <name>UDP</name>
        <dbReference type="ChEBI" id="CHEBI:58223"/>
    </ligand>
</feature>
<feature type="binding site" evidence="3">
    <location>
        <position position="259"/>
    </location>
    <ligand>
        <name>CMP-N-acetyl-beta-neuraminate</name>
        <dbReference type="ChEBI" id="CHEBI:57812"/>
        <note>allosteric inhibitor</note>
    </ligand>
</feature>
<feature type="binding site" evidence="3">
    <location>
        <position position="271"/>
    </location>
    <ligand>
        <name>CMP-N-acetyl-beta-neuraminate</name>
        <dbReference type="ChEBI" id="CHEBI:57812"/>
        <note>allosteric inhibitor</note>
    </ligand>
</feature>
<feature type="binding site" evidence="3">
    <location>
        <position position="280"/>
    </location>
    <ligand>
        <name>CMP-N-acetyl-beta-neuraminate</name>
        <dbReference type="ChEBI" id="CHEBI:57812"/>
        <note>allosteric inhibitor</note>
    </ligand>
</feature>
<feature type="binding site" evidence="3">
    <location>
        <position position="281"/>
    </location>
    <ligand>
        <name>CMP-N-acetyl-beta-neuraminate</name>
        <dbReference type="ChEBI" id="CHEBI:57812"/>
        <note>allosteric inhibitor</note>
    </ligand>
</feature>
<feature type="binding site" evidence="3">
    <location>
        <position position="282"/>
    </location>
    <ligand>
        <name>UDP</name>
        <dbReference type="ChEBI" id="CHEBI:58223"/>
    </ligand>
</feature>
<feature type="binding site" evidence="3">
    <location>
        <position position="301"/>
    </location>
    <ligand>
        <name>UDP</name>
        <dbReference type="ChEBI" id="CHEBI:58223"/>
    </ligand>
</feature>
<feature type="binding site" evidence="3">
    <location>
        <position position="302"/>
    </location>
    <ligand>
        <name>UDP</name>
        <dbReference type="ChEBI" id="CHEBI:58223"/>
    </ligand>
</feature>
<feature type="binding site" evidence="3">
    <location>
        <position position="307"/>
    </location>
    <ligand>
        <name>UDP</name>
        <dbReference type="ChEBI" id="CHEBI:58223"/>
    </ligand>
</feature>
<feature type="binding site" evidence="3">
    <location>
        <position position="321"/>
    </location>
    <ligand>
        <name>UDP</name>
        <dbReference type="ChEBI" id="CHEBI:58223"/>
    </ligand>
</feature>
<feature type="binding site" evidence="3">
    <location>
        <position position="413"/>
    </location>
    <ligand>
        <name>Mg(2+)</name>
        <dbReference type="ChEBI" id="CHEBI:18420"/>
    </ligand>
</feature>
<feature type="binding site" evidence="3">
    <location>
        <position position="416"/>
    </location>
    <ligand>
        <name>an N-acyl-D-mannosamine 6-phosphate</name>
        <dbReference type="ChEBI" id="CHEBI:57666"/>
    </ligand>
</feature>
<feature type="binding site" evidence="3">
    <location>
        <position position="417"/>
    </location>
    <ligand>
        <name>ADP</name>
        <dbReference type="ChEBI" id="CHEBI:456216"/>
    </ligand>
</feature>
<feature type="binding site" evidence="3">
    <location>
        <position position="418"/>
    </location>
    <ligand>
        <name>ADP</name>
        <dbReference type="ChEBI" id="CHEBI:456216"/>
    </ligand>
</feature>
<feature type="binding site" evidence="3">
    <location>
        <position position="420"/>
    </location>
    <ligand>
        <name>ADP</name>
        <dbReference type="ChEBI" id="CHEBI:456216"/>
    </ligand>
</feature>
<feature type="binding site" evidence="3">
    <location>
        <position position="476"/>
    </location>
    <ligand>
        <name>an N-acyl-D-mannosamine</name>
        <dbReference type="ChEBI" id="CHEBI:16062"/>
    </ligand>
</feature>
<feature type="binding site" evidence="3">
    <location>
        <position position="476"/>
    </location>
    <ligand>
        <name>an N-acyl-D-mannosamine 6-phosphate</name>
        <dbReference type="ChEBI" id="CHEBI:57666"/>
    </ligand>
</feature>
<feature type="binding site" evidence="3">
    <location>
        <position position="477"/>
    </location>
    <ligand>
        <name>an N-acyl-D-mannosamine</name>
        <dbReference type="ChEBI" id="CHEBI:16062"/>
    </ligand>
</feature>
<feature type="binding site" evidence="3">
    <location>
        <position position="477"/>
    </location>
    <ligand>
        <name>an N-acyl-D-mannosamine 6-phosphate</name>
        <dbReference type="ChEBI" id="CHEBI:57666"/>
    </ligand>
</feature>
<feature type="binding site" evidence="3">
    <location>
        <position position="489"/>
    </location>
    <ligand>
        <name>an N-acyl-D-mannosamine</name>
        <dbReference type="ChEBI" id="CHEBI:16062"/>
    </ligand>
</feature>
<feature type="binding site" evidence="3">
    <location>
        <position position="489"/>
    </location>
    <ligand>
        <name>an N-acyl-D-mannosamine 6-phosphate</name>
        <dbReference type="ChEBI" id="CHEBI:57666"/>
    </ligand>
</feature>
<feature type="binding site" evidence="3">
    <location>
        <position position="516"/>
    </location>
    <ligand>
        <name>an N-acyl-D-mannosamine</name>
        <dbReference type="ChEBI" id="CHEBI:16062"/>
    </ligand>
</feature>
<feature type="binding site" evidence="3">
    <location>
        <position position="516"/>
    </location>
    <ligand>
        <name>an N-acyl-D-mannosamine 6-phosphate</name>
        <dbReference type="ChEBI" id="CHEBI:57666"/>
    </ligand>
</feature>
<feature type="binding site" evidence="3">
    <location>
        <position position="517"/>
    </location>
    <ligand>
        <name>an N-acyl-D-mannosamine</name>
        <dbReference type="ChEBI" id="CHEBI:16062"/>
    </ligand>
</feature>
<feature type="binding site" evidence="3">
    <location>
        <position position="517"/>
    </location>
    <ligand>
        <name>an N-acyl-D-mannosamine 6-phosphate</name>
        <dbReference type="ChEBI" id="CHEBI:57666"/>
    </ligand>
</feature>
<feature type="binding site" evidence="3">
    <location>
        <position position="545"/>
    </location>
    <ligand>
        <name>an N-acyl-D-mannosamine 6-phosphate</name>
        <dbReference type="ChEBI" id="CHEBI:57666"/>
    </ligand>
</feature>
<feature type="binding site" evidence="3">
    <location>
        <position position="566"/>
    </location>
    <ligand>
        <name>an N-acyl-D-mannosamine</name>
        <dbReference type="ChEBI" id="CHEBI:16062"/>
    </ligand>
</feature>
<feature type="binding site" evidence="3">
    <location>
        <position position="569"/>
    </location>
    <ligand>
        <name>an N-acyl-D-mannosamine</name>
        <dbReference type="ChEBI" id="CHEBI:16062"/>
    </ligand>
</feature>
<feature type="binding site" evidence="3">
    <location>
        <position position="569"/>
    </location>
    <ligand>
        <name>an N-acyl-D-mannosamine 6-phosphate</name>
        <dbReference type="ChEBI" id="CHEBI:57666"/>
    </ligand>
</feature>
<feature type="binding site" evidence="3">
    <location>
        <position position="569"/>
    </location>
    <ligand>
        <name>Zn(2+)</name>
        <dbReference type="ChEBI" id="CHEBI:29105"/>
        <note>structural</note>
    </ligand>
</feature>
<feature type="binding site" evidence="3">
    <location>
        <position position="579"/>
    </location>
    <ligand>
        <name>Zn(2+)</name>
        <dbReference type="ChEBI" id="CHEBI:29105"/>
        <note>structural</note>
    </ligand>
</feature>
<feature type="binding site" evidence="3">
    <location>
        <position position="581"/>
    </location>
    <ligand>
        <name>Zn(2+)</name>
        <dbReference type="ChEBI" id="CHEBI:29105"/>
        <note>structural</note>
    </ligand>
</feature>
<feature type="binding site" evidence="3">
    <location>
        <position position="586"/>
    </location>
    <ligand>
        <name>Zn(2+)</name>
        <dbReference type="ChEBI" id="CHEBI:29105"/>
        <note>structural</note>
    </ligand>
</feature>
<feature type="binding site" evidence="3">
    <location>
        <position position="588"/>
    </location>
    <ligand>
        <name>an N-acyl-D-mannosamine</name>
        <dbReference type="ChEBI" id="CHEBI:16062"/>
    </ligand>
</feature>
<feature type="binding site" evidence="3">
    <location>
        <position position="588"/>
    </location>
    <ligand>
        <name>an N-acyl-D-mannosamine 6-phosphate</name>
        <dbReference type="ChEBI" id="CHEBI:57666"/>
    </ligand>
</feature>
<feature type="sequence variant" description="In Lec3 cell glycosylation mutants; loss of UDP-N-acetylglucosamine 2-epimerase activity." evidence="4">
    <original>G</original>
    <variation>E</variation>
    <location>
        <position position="135"/>
    </location>
</feature>
<proteinExistence type="evidence at protein level"/>
<comment type="function">
    <text evidence="3 4">Bifunctional enzyme that possesses both UDP-N-acetylglucosamine 2-epimerase and N-acetylmannosamine kinase activities, and serves as the initiator of the biosynthetic pathway leading to the production of N-acetylneuraminic acid (NeuAc), a critical precursor in the synthesis of sialic acids (PubMed:14561743). By catalyzing this pivotal and rate-limiting step in sialic acid biosynthesis, this enzyme assumes a pivotal role in governing the regulation of cell surface sialylation, playing a role in embryonic angiogenesis. Sialic acids represent a category of negatively charged sugars that reside on the surface of cells as terminal components of glycoconjugates and mediate important functions in various cellular processes, including cell adhesion, signal transduction, and cellular recognition (By similarity).</text>
</comment>
<comment type="catalytic activity">
    <reaction evidence="4">
        <text>UDP-N-acetyl-alpha-D-glucosamine + H2O = aldehydo-N-acetyl-D-mannosamine + UDP + H(+)</text>
        <dbReference type="Rhea" id="RHEA:30683"/>
        <dbReference type="ChEBI" id="CHEBI:15377"/>
        <dbReference type="ChEBI" id="CHEBI:15378"/>
        <dbReference type="ChEBI" id="CHEBI:17122"/>
        <dbReference type="ChEBI" id="CHEBI:57705"/>
        <dbReference type="ChEBI" id="CHEBI:58223"/>
        <dbReference type="EC" id="3.2.1.183"/>
    </reaction>
    <physiologicalReaction direction="left-to-right" evidence="6">
        <dbReference type="Rhea" id="RHEA:30684"/>
    </physiologicalReaction>
</comment>
<comment type="catalytic activity">
    <reaction evidence="3">
        <text>an N-acyl-D-mannosamine + ATP = an N-acyl-D-mannosamine 6-phosphate + ADP + H(+)</text>
        <dbReference type="Rhea" id="RHEA:23832"/>
        <dbReference type="ChEBI" id="CHEBI:15378"/>
        <dbReference type="ChEBI" id="CHEBI:16062"/>
        <dbReference type="ChEBI" id="CHEBI:30616"/>
        <dbReference type="ChEBI" id="CHEBI:57666"/>
        <dbReference type="ChEBI" id="CHEBI:456216"/>
        <dbReference type="EC" id="2.7.1.60"/>
    </reaction>
    <physiologicalReaction direction="left-to-right" evidence="3">
        <dbReference type="Rhea" id="RHEA:23833"/>
    </physiologicalReaction>
</comment>
<comment type="activity regulation">
    <text evidence="1 2 3">The UDP-N-acetylglucosamine 2-epimerase activity, in contrast to the N-acetylmannosamine kinase activity, exhibits allosteric regulation by cytidine monophosphate-N-acetylneuraminic acid (CMP-Neu5Ac), the end product of neuraminic acid biosynthesis (By similarity). Moreover, the activity is contingent upon the oligomeric state of the enzyme. The monomeric form is inactive, while the dimeric form selectively catalyzes the phosphorylation of N-acetylmannosamine. The hexameric form, on the other hand, demonstrates full proficiency in both enzyme activities (By similarity). Furthermore, the UDP-N-acetylglucosamine 2-epimerase activity is increased by PKC-mediated phosphorylation (By similarity).</text>
</comment>
<comment type="pathway">
    <text evidence="3">Amino-sugar metabolism; N-acetylneuraminate biosynthesis.</text>
</comment>
<comment type="subunit">
    <text evidence="1 3">Homodimer. Homotetramer. Homohexamer (By similarity). The hexameric form exhibits both enzyme activities, whereas the dimeric form only catalyzes the phosphorylation of N-acyl-D-mannosamine (By similarity).</text>
</comment>
<comment type="subcellular location">
    <subcellularLocation>
        <location evidence="1">Cytoplasm</location>
        <location evidence="1">Cytosol</location>
    </subcellularLocation>
</comment>
<comment type="PTM">
    <text evidence="2">Phosphorylated. Phosphorylation by PKC activates the UDP-N-acetylglucosamine 2-epimerase activity.</text>
</comment>
<comment type="similarity">
    <text evidence="5">In the N-terminal section; belongs to the UDP-N-acetylglucosamine 2-epimerase family.</text>
</comment>
<comment type="similarity">
    <text evidence="5">In the C-terminal section; belongs to the ROK (NagC/XylR) family.</text>
</comment>
<dbReference type="EC" id="3.2.1.183" evidence="4"/>
<dbReference type="EC" id="2.7.1.60" evidence="3"/>
<dbReference type="EMBL" id="AB107226">
    <property type="protein sequence ID" value="BAC78543.1"/>
    <property type="molecule type" value="mRNA"/>
</dbReference>
<dbReference type="RefSeq" id="NP_001233638.1">
    <property type="nucleotide sequence ID" value="NM_001246709.1"/>
</dbReference>
<dbReference type="SMR" id="Q7TQ49"/>
<dbReference type="PaxDb" id="10029-NP_001233638.1"/>
<dbReference type="GeneID" id="100689450"/>
<dbReference type="KEGG" id="cge:100689450"/>
<dbReference type="CTD" id="10020"/>
<dbReference type="eggNOG" id="ENOG502QUGI">
    <property type="taxonomic scope" value="Eukaryota"/>
</dbReference>
<dbReference type="OrthoDB" id="2968753at2759"/>
<dbReference type="UniPathway" id="UPA00630"/>
<dbReference type="Proteomes" id="UP000694386">
    <property type="component" value="Unplaced"/>
</dbReference>
<dbReference type="Proteomes" id="UP001108280">
    <property type="component" value="Chromosome 2"/>
</dbReference>
<dbReference type="GO" id="GO:0005829">
    <property type="term" value="C:cytosol"/>
    <property type="evidence" value="ECO:0000250"/>
    <property type="project" value="UniProtKB"/>
</dbReference>
<dbReference type="GO" id="GO:0005524">
    <property type="term" value="F:ATP binding"/>
    <property type="evidence" value="ECO:0007669"/>
    <property type="project" value="UniProtKB-KW"/>
</dbReference>
<dbReference type="GO" id="GO:0004553">
    <property type="term" value="F:hydrolase activity, hydrolyzing O-glycosyl compounds"/>
    <property type="evidence" value="ECO:0007669"/>
    <property type="project" value="InterPro"/>
</dbReference>
<dbReference type="GO" id="GO:0046872">
    <property type="term" value="F:metal ion binding"/>
    <property type="evidence" value="ECO:0007669"/>
    <property type="project" value="UniProtKB-KW"/>
</dbReference>
<dbReference type="GO" id="GO:0009384">
    <property type="term" value="F:N-acylmannosamine kinase activity"/>
    <property type="evidence" value="ECO:0000315"/>
    <property type="project" value="UniProtKB"/>
</dbReference>
<dbReference type="GO" id="GO:0008761">
    <property type="term" value="F:UDP-N-acetylglucosamine 2-epimerase activity"/>
    <property type="evidence" value="ECO:0000314"/>
    <property type="project" value="UniProtKB"/>
</dbReference>
<dbReference type="GO" id="GO:0006045">
    <property type="term" value="P:N-acetylglucosamine biosynthetic process"/>
    <property type="evidence" value="ECO:0007669"/>
    <property type="project" value="UniProtKB-UniPathway"/>
</dbReference>
<dbReference type="GO" id="GO:0046380">
    <property type="term" value="P:N-acetylneuraminate biosynthetic process"/>
    <property type="evidence" value="ECO:0000315"/>
    <property type="project" value="UniProtKB"/>
</dbReference>
<dbReference type="GO" id="GO:0006047">
    <property type="term" value="P:UDP-N-acetylglucosamine metabolic process"/>
    <property type="evidence" value="ECO:0007669"/>
    <property type="project" value="InterPro"/>
</dbReference>
<dbReference type="CDD" id="cd24060">
    <property type="entry name" value="ASKHA_NBD_ROK_GNE"/>
    <property type="match status" value="1"/>
</dbReference>
<dbReference type="CDD" id="cd03786">
    <property type="entry name" value="GTB_UDP-GlcNAc_2-Epimerase"/>
    <property type="match status" value="1"/>
</dbReference>
<dbReference type="FunFam" id="3.30.420.40:FF:000053">
    <property type="entry name" value="Bifunctional UDP-N-acetylglucosamine 2-epimerase/N-acetylmannosamine kinase"/>
    <property type="match status" value="1"/>
</dbReference>
<dbReference type="FunFam" id="3.30.420.40:FF:000060">
    <property type="entry name" value="Bifunctional UDP-N-acetylglucosamine 2-epimerase/N-acetylmannosamine kinase"/>
    <property type="match status" value="1"/>
</dbReference>
<dbReference type="FunFam" id="3.40.50.2000:FF:000013">
    <property type="entry name" value="Bifunctional UDP-N-acetylglucosamine 2-epimerase/N-acetylmannosamine kinase"/>
    <property type="match status" value="1"/>
</dbReference>
<dbReference type="FunFam" id="3.40.50.2000:FF:000015">
    <property type="entry name" value="Bifunctional UDP-N-acetylglucosamine 2-epimerase/N-acetylmannosamine kinase"/>
    <property type="match status" value="1"/>
</dbReference>
<dbReference type="Gene3D" id="3.30.420.40">
    <property type="match status" value="2"/>
</dbReference>
<dbReference type="Gene3D" id="3.40.50.2000">
    <property type="entry name" value="Glycogen Phosphorylase B"/>
    <property type="match status" value="2"/>
</dbReference>
<dbReference type="InterPro" id="IPR043129">
    <property type="entry name" value="ATPase_NBD"/>
</dbReference>
<dbReference type="InterPro" id="IPR000600">
    <property type="entry name" value="ROK"/>
</dbReference>
<dbReference type="InterPro" id="IPR020004">
    <property type="entry name" value="UDP-GlcNAc_Epase"/>
</dbReference>
<dbReference type="InterPro" id="IPR003331">
    <property type="entry name" value="UDP_GlcNAc_Epimerase_2_dom"/>
</dbReference>
<dbReference type="NCBIfam" id="TIGR03568">
    <property type="entry name" value="NeuC_NnaA"/>
    <property type="match status" value="1"/>
</dbReference>
<dbReference type="PANTHER" id="PTHR18964:SF149">
    <property type="entry name" value="BIFUNCTIONAL UDP-N-ACETYLGLUCOSAMINE 2-EPIMERASE_N-ACETYLMANNOSAMINE KINASE"/>
    <property type="match status" value="1"/>
</dbReference>
<dbReference type="PANTHER" id="PTHR18964">
    <property type="entry name" value="ROK (REPRESSOR, ORF, KINASE) FAMILY"/>
    <property type="match status" value="1"/>
</dbReference>
<dbReference type="Pfam" id="PF02350">
    <property type="entry name" value="Epimerase_2"/>
    <property type="match status" value="1"/>
</dbReference>
<dbReference type="Pfam" id="PF00480">
    <property type="entry name" value="ROK"/>
    <property type="match status" value="1"/>
</dbReference>
<dbReference type="PRINTS" id="PR00475">
    <property type="entry name" value="HEXOKINASE"/>
</dbReference>
<dbReference type="SUPFAM" id="SSF53067">
    <property type="entry name" value="Actin-like ATPase domain"/>
    <property type="match status" value="1"/>
</dbReference>
<dbReference type="SUPFAM" id="SSF53756">
    <property type="entry name" value="UDP-Glycosyltransferase/glycogen phosphorylase"/>
    <property type="match status" value="1"/>
</dbReference>
<name>GLCNE_CRIGR</name>
<gene>
    <name type="primary">GNE</name>
    <name type="synonym">GLCNE</name>
</gene>
<accession>Q7TQ49</accession>
<protein>
    <recommendedName>
        <fullName evidence="5">Bifunctional UDP-N-acetylglucosamine 2-epimerase/N-acetylmannosamine kinase</fullName>
    </recommendedName>
    <alternativeName>
        <fullName>UDP-GlcNAc-2-epimerase/ManAc kinase</fullName>
    </alternativeName>
    <domain>
        <recommendedName>
            <fullName evidence="6">UDP-N-acetylglucosamine 2-epimerase (hydrolyzing)</fullName>
            <ecNumber evidence="4">3.2.1.183</ecNumber>
        </recommendedName>
        <alternativeName>
            <fullName>UDP-GlcNAc-2-epimerase</fullName>
        </alternativeName>
        <alternativeName>
            <fullName>Uridine diphosphate-N-acetylglucosamine-2-epimerase</fullName>
        </alternativeName>
    </domain>
    <domain>
        <recommendedName>
            <fullName evidence="3">N-acetylmannosamine kinase</fullName>
            <ecNumber evidence="3">2.7.1.60</ecNumber>
        </recommendedName>
        <alternativeName>
            <fullName>ManAc kinase</fullName>
        </alternativeName>
    </domain>
</protein>
<evidence type="ECO:0000250" key="1">
    <source>
        <dbReference type="UniProtKB" id="O35826"/>
    </source>
</evidence>
<evidence type="ECO:0000250" key="2">
    <source>
        <dbReference type="UniProtKB" id="Q91WG8"/>
    </source>
</evidence>
<evidence type="ECO:0000250" key="3">
    <source>
        <dbReference type="UniProtKB" id="Q9Y223"/>
    </source>
</evidence>
<evidence type="ECO:0000269" key="4">
    <source>
    </source>
</evidence>
<evidence type="ECO:0000305" key="5"/>
<evidence type="ECO:0000305" key="6">
    <source>
    </source>
</evidence>
<sequence length="722" mass="79241">MEKNGNNRKLRVCVATCNRADYSKLAPIMFGIKTEPAFFELDVVVLGSHLIDDYGNTYRMIEQDDFDINTRLHTIVRGEDEAAMVESVGLALVKLPDVLNRLKPDIMIVHGDRFDALALATSAALMNIRILHIEGGEVSGTIDDSIRHAITKLAHYHVCCTRSAEQHLISMCEDHDRILLAGCPSYDKLLSAKNKDYMSIIRMWLGDDVKCKDYIVALQHPVTTDIKHSIKMFELTLDALISFNKRTLVLFPNIDAGSKEMVRVMRKKGIEHHPNFRAVKHVPFDQFIQLVAHAGCMIGNSSCGVREVGAFGTPVINLGTRQIGRETGENVLHVRDADTQDKILQALHLQFGKQYPCSKIYGDGNAVPRILKFLKSIDLQEPLQKKFCFPPVKENISQDIDHILETLSALAVDLGGTNLRVAIVSMKGEIVKKYTQFNPKTYEERISLILQMCVEAAAEAVKLNCRILGVGISTGGRVNPQEGIVLHSTKLIQEWNSVDLRTPLSDTLHLPVWVDNDGNCAAMAERKFGQGKGQENFVTLITGTGIGGGIIHQHELIHGSSFCAAELGHLVVSLDGPDCSCGSHGCIEAYASGMALQREAKKLHDEDLLLVEGMSVPKDEPVGALHLIQAAKLGNVKAQNILRTAGTALGLGVVNILHTMDPSLVILSGVLASHYIHIVKDVIRQQASSSVQDVDVVVSDLVDPALLGAASMVLDYTTRRIH</sequence>